<proteinExistence type="inferred from homology"/>
<accession>O86459</accession>
<organism>
    <name type="scientific">Rhizobium leguminosarum bv. phaseoli</name>
    <dbReference type="NCBI Taxonomy" id="385"/>
    <lineage>
        <taxon>Bacteria</taxon>
        <taxon>Pseudomonadati</taxon>
        <taxon>Pseudomonadota</taxon>
        <taxon>Alphaproteobacteria</taxon>
        <taxon>Hyphomicrobiales</taxon>
        <taxon>Rhizobiaceae</taxon>
        <taxon>Rhizobium/Agrobacterium group</taxon>
        <taxon>Rhizobium</taxon>
    </lineage>
</organism>
<reference key="1">
    <citation type="submission" date="1998-06" db="EMBL/GenBank/DDBJ databases">
        <title>Sequence of an aspartate aminotransferase from Rhizobium leguminosarum.</title>
        <authorList>
            <person name="Allaway D."/>
        </authorList>
    </citation>
    <scope>NUCLEOTIDE SEQUENCE [GENOMIC DNA]</scope>
    <source>
        <strain>8002</strain>
    </source>
</reference>
<feature type="chain" id="PRO_0000123846" description="Probable aspartate/prephenate aminotransferase">
    <location>
        <begin position="1"/>
        <end position="400"/>
    </location>
</feature>
<feature type="binding site" evidence="1">
    <location>
        <position position="39"/>
    </location>
    <ligand>
        <name>L-aspartate</name>
        <dbReference type="ChEBI" id="CHEBI:29991"/>
    </ligand>
</feature>
<feature type="binding site" evidence="3">
    <location>
        <position position="125"/>
    </location>
    <ligand>
        <name>L-aspartate</name>
        <dbReference type="ChEBI" id="CHEBI:29991"/>
    </ligand>
</feature>
<feature type="binding site" evidence="3">
    <location>
        <position position="175"/>
    </location>
    <ligand>
        <name>L-aspartate</name>
        <dbReference type="ChEBI" id="CHEBI:29991"/>
    </ligand>
</feature>
<feature type="binding site" evidence="3">
    <location>
        <position position="375"/>
    </location>
    <ligand>
        <name>L-aspartate</name>
        <dbReference type="ChEBI" id="CHEBI:29991"/>
    </ligand>
</feature>
<feature type="site" description="Important for prephenate aminotransferase activity" evidence="3">
    <location>
        <position position="12"/>
    </location>
</feature>
<feature type="modified residue" description="N6-(pyridoxal phosphate)lysine" evidence="3">
    <location>
        <position position="239"/>
    </location>
</feature>
<sequence>MAFLADALSRVKPSATIAVSQKARELKAKGRDVIGLGAGEPDFDTPDNIKKAAIDAINRGETKYTPVSGIPELRKAIAAKFKRENGLDYSWEQTIVGTGGKQILFNAFMATLNPGDEVSIPAPYWVSYPEMVALCGGTRFFVSATQEHNFKLQAADLEKAITPKTKWFIFNSPSNPTGAAYTHDELKALTDVLMKNPQVWVLTDDMYEHLTYGDFKFVTPVEVEPQLYDRTLTMNGVSKAYAMTGWRIGYAAGPIQLIKAMDMIQGQQTSGATSIAQWAAVEALNGTQDFIPENKKIFEGRRDLVVSMLNQAKGIVCPVPEGAFYVYPSCKGLIGKTAPSGKVIETDEDFVSELLESEGVAVVHGSAFGLGPNFRISYATSEEQLEEACRRIQRFCGACK</sequence>
<gene>
    <name type="primary">aspC</name>
    <name type="synonym">aatA</name>
</gene>
<comment type="function">
    <text evidence="2">Catalyzes the reversible conversion of aspartate and 2-oxoglutarate to glutamate and oxaloacetate. Can also transaminate prephenate in the presence of glutamate.</text>
</comment>
<comment type="catalytic activity">
    <reaction evidence="2">
        <text>L-aspartate + 2-oxoglutarate = oxaloacetate + L-glutamate</text>
        <dbReference type="Rhea" id="RHEA:21824"/>
        <dbReference type="ChEBI" id="CHEBI:16452"/>
        <dbReference type="ChEBI" id="CHEBI:16810"/>
        <dbReference type="ChEBI" id="CHEBI:29985"/>
        <dbReference type="ChEBI" id="CHEBI:29991"/>
        <dbReference type="EC" id="2.6.1.1"/>
    </reaction>
</comment>
<comment type="catalytic activity">
    <reaction evidence="2">
        <text>L-arogenate + 2-oxoglutarate = prephenate + L-glutamate</text>
        <dbReference type="Rhea" id="RHEA:22880"/>
        <dbReference type="ChEBI" id="CHEBI:16810"/>
        <dbReference type="ChEBI" id="CHEBI:29934"/>
        <dbReference type="ChEBI" id="CHEBI:29985"/>
        <dbReference type="ChEBI" id="CHEBI:58180"/>
        <dbReference type="EC" id="2.6.1.79"/>
    </reaction>
</comment>
<comment type="cofactor">
    <cofactor evidence="2">
        <name>pyridoxal 5'-phosphate</name>
        <dbReference type="ChEBI" id="CHEBI:597326"/>
    </cofactor>
</comment>
<comment type="subunit">
    <text evidence="2">Homodimer.</text>
</comment>
<comment type="subcellular location">
    <subcellularLocation>
        <location evidence="2">Cytoplasm</location>
    </subcellularLocation>
</comment>
<comment type="similarity">
    <text evidence="4">Belongs to the class-I pyridoxal-phosphate-dependent aminotransferase family.</text>
</comment>
<evidence type="ECO:0000250" key="1">
    <source>
        <dbReference type="UniProtKB" id="P00509"/>
    </source>
</evidence>
<evidence type="ECO:0000250" key="2">
    <source>
        <dbReference type="UniProtKB" id="Q02635"/>
    </source>
</evidence>
<evidence type="ECO:0000250" key="3">
    <source>
        <dbReference type="UniProtKB" id="Q56232"/>
    </source>
</evidence>
<evidence type="ECO:0000305" key="4"/>
<dbReference type="EC" id="2.6.1.1" evidence="2"/>
<dbReference type="EC" id="2.6.1.79" evidence="2"/>
<dbReference type="EMBL" id="AJ006709">
    <property type="protein sequence ID" value="CAA07198.1"/>
    <property type="molecule type" value="Genomic_DNA"/>
</dbReference>
<dbReference type="SMR" id="O86459"/>
<dbReference type="GO" id="GO:0005737">
    <property type="term" value="C:cytoplasm"/>
    <property type="evidence" value="ECO:0007669"/>
    <property type="project" value="UniProtKB-SubCell"/>
</dbReference>
<dbReference type="GO" id="GO:0033854">
    <property type="term" value="F:glutamate-prephenate aminotransferase activity"/>
    <property type="evidence" value="ECO:0007669"/>
    <property type="project" value="UniProtKB-EC"/>
</dbReference>
<dbReference type="GO" id="GO:0004069">
    <property type="term" value="F:L-aspartate:2-oxoglutarate aminotransferase activity"/>
    <property type="evidence" value="ECO:0007669"/>
    <property type="project" value="UniProtKB-EC"/>
</dbReference>
<dbReference type="GO" id="GO:0030170">
    <property type="term" value="F:pyridoxal phosphate binding"/>
    <property type="evidence" value="ECO:0007669"/>
    <property type="project" value="InterPro"/>
</dbReference>
<dbReference type="GO" id="GO:0006520">
    <property type="term" value="P:amino acid metabolic process"/>
    <property type="evidence" value="ECO:0007669"/>
    <property type="project" value="InterPro"/>
</dbReference>
<dbReference type="GO" id="GO:0009058">
    <property type="term" value="P:biosynthetic process"/>
    <property type="evidence" value="ECO:0007669"/>
    <property type="project" value="InterPro"/>
</dbReference>
<dbReference type="CDD" id="cd00609">
    <property type="entry name" value="AAT_like"/>
    <property type="match status" value="1"/>
</dbReference>
<dbReference type="FunFam" id="3.40.640.10:FF:000033">
    <property type="entry name" value="Aspartate aminotransferase"/>
    <property type="match status" value="1"/>
</dbReference>
<dbReference type="Gene3D" id="3.90.1150.10">
    <property type="entry name" value="Aspartate Aminotransferase, domain 1"/>
    <property type="match status" value="1"/>
</dbReference>
<dbReference type="Gene3D" id="3.40.640.10">
    <property type="entry name" value="Type I PLP-dependent aspartate aminotransferase-like (Major domain)"/>
    <property type="match status" value="1"/>
</dbReference>
<dbReference type="InterPro" id="IPR004839">
    <property type="entry name" value="Aminotransferase_I/II_large"/>
</dbReference>
<dbReference type="InterPro" id="IPR050596">
    <property type="entry name" value="AspAT/PAT-like"/>
</dbReference>
<dbReference type="InterPro" id="IPR004838">
    <property type="entry name" value="NHTrfase_class1_PyrdxlP-BS"/>
</dbReference>
<dbReference type="InterPro" id="IPR015424">
    <property type="entry name" value="PyrdxlP-dep_Trfase"/>
</dbReference>
<dbReference type="InterPro" id="IPR015421">
    <property type="entry name" value="PyrdxlP-dep_Trfase_major"/>
</dbReference>
<dbReference type="InterPro" id="IPR015422">
    <property type="entry name" value="PyrdxlP-dep_Trfase_small"/>
</dbReference>
<dbReference type="PANTHER" id="PTHR46383">
    <property type="entry name" value="ASPARTATE AMINOTRANSFERASE"/>
    <property type="match status" value="1"/>
</dbReference>
<dbReference type="PANTHER" id="PTHR46383:SF1">
    <property type="entry name" value="ASPARTATE AMINOTRANSFERASE"/>
    <property type="match status" value="1"/>
</dbReference>
<dbReference type="Pfam" id="PF00155">
    <property type="entry name" value="Aminotran_1_2"/>
    <property type="match status" value="1"/>
</dbReference>
<dbReference type="SUPFAM" id="SSF53383">
    <property type="entry name" value="PLP-dependent transferases"/>
    <property type="match status" value="1"/>
</dbReference>
<dbReference type="PROSITE" id="PS00105">
    <property type="entry name" value="AA_TRANSFER_CLASS_1"/>
    <property type="match status" value="1"/>
</dbReference>
<protein>
    <recommendedName>
        <fullName evidence="2">Probable aspartate/prephenate aminotransferase</fullName>
        <shortName evidence="2">AspAT / PAT</shortName>
        <ecNumber evidence="2">2.6.1.1</ecNumber>
        <ecNumber evidence="2">2.6.1.79</ecNumber>
    </recommendedName>
    <alternativeName>
        <fullName>Transaminase A</fullName>
    </alternativeName>
</protein>
<keyword id="KW-0032">Aminotransferase</keyword>
<keyword id="KW-0963">Cytoplasm</keyword>
<keyword id="KW-0663">Pyridoxal phosphate</keyword>
<keyword id="KW-0808">Transferase</keyword>
<name>AAPAT_RHILP</name>